<dbReference type="EMBL" id="Z92953">
    <property type="protein sequence ID" value="CAB07460.1"/>
    <property type="molecule type" value="Genomic_DNA"/>
</dbReference>
<dbReference type="EMBL" id="AL009126">
    <property type="protein sequence ID" value="CAB15614.1"/>
    <property type="molecule type" value="Genomic_DNA"/>
</dbReference>
<dbReference type="PIR" id="E70069">
    <property type="entry name" value="E70069"/>
</dbReference>
<dbReference type="RefSeq" id="NP_391478.1">
    <property type="nucleotide sequence ID" value="NC_000964.3"/>
</dbReference>
<dbReference type="RefSeq" id="WP_003243596.1">
    <property type="nucleotide sequence ID" value="NZ_OZ025638.1"/>
</dbReference>
<dbReference type="SMR" id="P96729"/>
<dbReference type="FunCoup" id="P96729">
    <property type="interactions" value="82"/>
</dbReference>
<dbReference type="STRING" id="224308.BSU35970"/>
<dbReference type="PaxDb" id="224308-BSU35970"/>
<dbReference type="EnsemblBacteria" id="CAB15614">
    <property type="protein sequence ID" value="CAB15614"/>
    <property type="gene ID" value="BSU_35970"/>
</dbReference>
<dbReference type="GeneID" id="936850"/>
<dbReference type="KEGG" id="bsu:BSU35970"/>
<dbReference type="PATRIC" id="fig|224308.179.peg.3894"/>
<dbReference type="eggNOG" id="COG3103">
    <property type="taxonomic scope" value="Bacteria"/>
</dbReference>
<dbReference type="InParanoid" id="P96729"/>
<dbReference type="OrthoDB" id="2455924at2"/>
<dbReference type="BioCyc" id="BSUB:BSU35970-MONOMER"/>
<dbReference type="Proteomes" id="UP000001570">
    <property type="component" value="Chromosome"/>
</dbReference>
<dbReference type="GO" id="GO:0005576">
    <property type="term" value="C:extracellular region"/>
    <property type="evidence" value="ECO:0007669"/>
    <property type="project" value="UniProtKB-KW"/>
</dbReference>
<dbReference type="Gene3D" id="2.30.30.40">
    <property type="entry name" value="SH3 Domains"/>
    <property type="match status" value="2"/>
</dbReference>
<dbReference type="InterPro" id="IPR052354">
    <property type="entry name" value="Cell_Wall_Dynamics_Protein"/>
</dbReference>
<dbReference type="InterPro" id="IPR003646">
    <property type="entry name" value="SH3-like_bac-type"/>
</dbReference>
<dbReference type="InterPro" id="IPR036028">
    <property type="entry name" value="SH3-like_dom_sf"/>
</dbReference>
<dbReference type="PANTHER" id="PTHR34408:SF2">
    <property type="entry name" value="CELL WALL-BINDING PROTEIN YWSB"/>
    <property type="match status" value="1"/>
</dbReference>
<dbReference type="PANTHER" id="PTHR34408">
    <property type="entry name" value="FAMILY PROTEIN, PUTATIVE-RELATED"/>
    <property type="match status" value="1"/>
</dbReference>
<dbReference type="Pfam" id="PF08239">
    <property type="entry name" value="SH3_3"/>
    <property type="match status" value="1"/>
</dbReference>
<dbReference type="SMART" id="SM00287">
    <property type="entry name" value="SH3b"/>
    <property type="match status" value="2"/>
</dbReference>
<dbReference type="SUPFAM" id="SSF50044">
    <property type="entry name" value="SH3-domain"/>
    <property type="match status" value="1"/>
</dbReference>
<dbReference type="PROSITE" id="PS51781">
    <property type="entry name" value="SH3B"/>
    <property type="match status" value="2"/>
</dbReference>
<comment type="activity regulation">
    <text>Increases in stationary phase in a strain lacking the WprA protease.</text>
</comment>
<comment type="subcellular location">
    <subcellularLocation>
        <location evidence="2">Secreted</location>
        <location evidence="2">Cell wall</location>
    </subcellularLocation>
    <text>Released into the extracellular medium in a strain lacking the WprA protease.</text>
</comment>
<evidence type="ECO:0000255" key="1">
    <source>
        <dbReference type="PROSITE-ProRule" id="PRU01117"/>
    </source>
</evidence>
<evidence type="ECO:0000269" key="2">
    <source>
    </source>
</evidence>
<gene>
    <name type="primary">ywsB</name>
    <name type="ordered locus">BSU35970</name>
</gene>
<feature type="signal peptide" evidence="2">
    <location>
        <begin position="1"/>
        <end position="30"/>
    </location>
</feature>
<feature type="chain" id="PRO_0000380257" description="Cell wall-binding protein YwsB">
    <location>
        <begin position="31"/>
        <end position="178"/>
    </location>
</feature>
<feature type="domain" description="SH3b 1" evidence="1">
    <location>
        <begin position="47"/>
        <end position="111"/>
    </location>
</feature>
<feature type="domain" description="SH3b 2" evidence="1">
    <location>
        <begin position="116"/>
        <end position="178"/>
    </location>
</feature>
<accession>P96729</accession>
<accession>Q795C6</accession>
<name>YWSB_BACSU</name>
<keyword id="KW-0134">Cell wall</keyword>
<keyword id="KW-0903">Direct protein sequencing</keyword>
<keyword id="KW-1185">Reference proteome</keyword>
<keyword id="KW-0964">Secreted</keyword>
<keyword id="KW-0732">Signal</keyword>
<protein>
    <recommendedName>
        <fullName>Cell wall-binding protein YwsB</fullName>
    </recommendedName>
</protein>
<reference key="1">
    <citation type="journal article" date="1997" name="Microbiology">
        <title>The Bacillus subtilis genome from gerBC (311 degrees) to licR (334 degrees).</title>
        <authorList>
            <person name="Presecan E."/>
            <person name="Moszer I."/>
            <person name="Boursier L."/>
            <person name="Cruz Ramos H."/>
            <person name="De La Fuente V."/>
            <person name="Hullo M.-F."/>
            <person name="Lelong C."/>
            <person name="Schleich S."/>
            <person name="Sekowska A."/>
            <person name="Song B.H."/>
            <person name="Villani G."/>
            <person name="Kunst F."/>
            <person name="Danchin A."/>
            <person name="Glaser P."/>
        </authorList>
    </citation>
    <scope>NUCLEOTIDE SEQUENCE [GENOMIC DNA]</scope>
    <source>
        <strain>168</strain>
    </source>
</reference>
<reference key="2">
    <citation type="journal article" date="1997" name="Nature">
        <title>The complete genome sequence of the Gram-positive bacterium Bacillus subtilis.</title>
        <authorList>
            <person name="Kunst F."/>
            <person name="Ogasawara N."/>
            <person name="Moszer I."/>
            <person name="Albertini A.M."/>
            <person name="Alloni G."/>
            <person name="Azevedo V."/>
            <person name="Bertero M.G."/>
            <person name="Bessieres P."/>
            <person name="Bolotin A."/>
            <person name="Borchert S."/>
            <person name="Borriss R."/>
            <person name="Boursier L."/>
            <person name="Brans A."/>
            <person name="Braun M."/>
            <person name="Brignell S.C."/>
            <person name="Bron S."/>
            <person name="Brouillet S."/>
            <person name="Bruschi C.V."/>
            <person name="Caldwell B."/>
            <person name="Capuano V."/>
            <person name="Carter N.M."/>
            <person name="Choi S.-K."/>
            <person name="Codani J.-J."/>
            <person name="Connerton I.F."/>
            <person name="Cummings N.J."/>
            <person name="Daniel R.A."/>
            <person name="Denizot F."/>
            <person name="Devine K.M."/>
            <person name="Duesterhoeft A."/>
            <person name="Ehrlich S.D."/>
            <person name="Emmerson P.T."/>
            <person name="Entian K.-D."/>
            <person name="Errington J."/>
            <person name="Fabret C."/>
            <person name="Ferrari E."/>
            <person name="Foulger D."/>
            <person name="Fritz C."/>
            <person name="Fujita M."/>
            <person name="Fujita Y."/>
            <person name="Fuma S."/>
            <person name="Galizzi A."/>
            <person name="Galleron N."/>
            <person name="Ghim S.-Y."/>
            <person name="Glaser P."/>
            <person name="Goffeau A."/>
            <person name="Golightly E.J."/>
            <person name="Grandi G."/>
            <person name="Guiseppi G."/>
            <person name="Guy B.J."/>
            <person name="Haga K."/>
            <person name="Haiech J."/>
            <person name="Harwood C.R."/>
            <person name="Henaut A."/>
            <person name="Hilbert H."/>
            <person name="Holsappel S."/>
            <person name="Hosono S."/>
            <person name="Hullo M.-F."/>
            <person name="Itaya M."/>
            <person name="Jones L.-M."/>
            <person name="Joris B."/>
            <person name="Karamata D."/>
            <person name="Kasahara Y."/>
            <person name="Klaerr-Blanchard M."/>
            <person name="Klein C."/>
            <person name="Kobayashi Y."/>
            <person name="Koetter P."/>
            <person name="Koningstein G."/>
            <person name="Krogh S."/>
            <person name="Kumano M."/>
            <person name="Kurita K."/>
            <person name="Lapidus A."/>
            <person name="Lardinois S."/>
            <person name="Lauber J."/>
            <person name="Lazarevic V."/>
            <person name="Lee S.-M."/>
            <person name="Levine A."/>
            <person name="Liu H."/>
            <person name="Masuda S."/>
            <person name="Mauel C."/>
            <person name="Medigue C."/>
            <person name="Medina N."/>
            <person name="Mellado R.P."/>
            <person name="Mizuno M."/>
            <person name="Moestl D."/>
            <person name="Nakai S."/>
            <person name="Noback M."/>
            <person name="Noone D."/>
            <person name="O'Reilly M."/>
            <person name="Ogawa K."/>
            <person name="Ogiwara A."/>
            <person name="Oudega B."/>
            <person name="Park S.-H."/>
            <person name="Parro V."/>
            <person name="Pohl T.M."/>
            <person name="Portetelle D."/>
            <person name="Porwollik S."/>
            <person name="Prescott A.M."/>
            <person name="Presecan E."/>
            <person name="Pujic P."/>
            <person name="Purnelle B."/>
            <person name="Rapoport G."/>
            <person name="Rey M."/>
            <person name="Reynolds S."/>
            <person name="Rieger M."/>
            <person name="Rivolta C."/>
            <person name="Rocha E."/>
            <person name="Roche B."/>
            <person name="Rose M."/>
            <person name="Sadaie Y."/>
            <person name="Sato T."/>
            <person name="Scanlan E."/>
            <person name="Schleich S."/>
            <person name="Schroeter R."/>
            <person name="Scoffone F."/>
            <person name="Sekiguchi J."/>
            <person name="Sekowska A."/>
            <person name="Seror S.J."/>
            <person name="Serror P."/>
            <person name="Shin B.-S."/>
            <person name="Soldo B."/>
            <person name="Sorokin A."/>
            <person name="Tacconi E."/>
            <person name="Takagi T."/>
            <person name="Takahashi H."/>
            <person name="Takemaru K."/>
            <person name="Takeuchi M."/>
            <person name="Tamakoshi A."/>
            <person name="Tanaka T."/>
            <person name="Terpstra P."/>
            <person name="Tognoni A."/>
            <person name="Tosato V."/>
            <person name="Uchiyama S."/>
            <person name="Vandenbol M."/>
            <person name="Vannier F."/>
            <person name="Vassarotti A."/>
            <person name="Viari A."/>
            <person name="Wambutt R."/>
            <person name="Wedler E."/>
            <person name="Wedler H."/>
            <person name="Weitzenegger T."/>
            <person name="Winters P."/>
            <person name="Wipat A."/>
            <person name="Yamamoto H."/>
            <person name="Yamane K."/>
            <person name="Yasumoto K."/>
            <person name="Yata K."/>
            <person name="Yoshida K."/>
            <person name="Yoshikawa H.-F."/>
            <person name="Zumstein E."/>
            <person name="Yoshikawa H."/>
            <person name="Danchin A."/>
        </authorList>
    </citation>
    <scope>NUCLEOTIDE SEQUENCE [LARGE SCALE GENOMIC DNA]</scope>
    <source>
        <strain>168</strain>
    </source>
</reference>
<reference key="3">
    <citation type="journal article" date="2002" name="Proteomics">
        <title>Stabilization of cell wall proteins in Bacillus subtilis: a proteomic approach.</title>
        <authorList>
            <person name="Antelmann H."/>
            <person name="Yamamoto H."/>
            <person name="Sekiguchi J."/>
            <person name="Hecker M."/>
        </authorList>
    </citation>
    <scope>PROTEIN SEQUENCE OF N-TERMINUS</scope>
    <scope>IDENTIFICATION BY MASS SPECTROMETRY</scope>
    <scope>SUBCELLULAR LOCATION</scope>
    <scope>INDUCTION</scope>
    <source>
        <strain>168</strain>
    </source>
</reference>
<organism>
    <name type="scientific">Bacillus subtilis (strain 168)</name>
    <dbReference type="NCBI Taxonomy" id="224308"/>
    <lineage>
        <taxon>Bacteria</taxon>
        <taxon>Bacillati</taxon>
        <taxon>Bacillota</taxon>
        <taxon>Bacilli</taxon>
        <taxon>Bacillales</taxon>
        <taxon>Bacillaceae</taxon>
        <taxon>Bacillus</taxon>
    </lineage>
</organism>
<proteinExistence type="evidence at protein level"/>
<sequence length="178" mass="19109">MNKPTKLFSTLALAAGMTAAAAGGAGTIHAQQPETTVSIDDLYSYPIDSYLVSAEALNVRTKPSASSQKADTLHLGDSLKLISFSNADWAKVKYKNGKTGFVSTHYIVKAATTVKTKTKTKVYTSADGKSIKTLPADTSVSFLGWSKTNKGGFDFDWVFVDYGGTTGYMKTKDLHMTK</sequence>